<proteinExistence type="inferred from homology"/>
<protein>
    <recommendedName>
        <fullName evidence="1">Ribosomal RNA small subunit methyltransferase H</fullName>
        <ecNumber evidence="1">2.1.1.199</ecNumber>
    </recommendedName>
    <alternativeName>
        <fullName evidence="1">16S rRNA m(4)C1402 methyltransferase</fullName>
    </alternativeName>
    <alternativeName>
        <fullName evidence="1">rRNA (cytosine-N(4)-)-methyltransferase RsmH</fullName>
    </alternativeName>
</protein>
<comment type="function">
    <text evidence="1">Specifically methylates the N4 position of cytidine in position 1402 (C1402) of 16S rRNA.</text>
</comment>
<comment type="catalytic activity">
    <reaction evidence="1">
        <text>cytidine(1402) in 16S rRNA + S-adenosyl-L-methionine = N(4)-methylcytidine(1402) in 16S rRNA + S-adenosyl-L-homocysteine + H(+)</text>
        <dbReference type="Rhea" id="RHEA:42928"/>
        <dbReference type="Rhea" id="RHEA-COMP:10286"/>
        <dbReference type="Rhea" id="RHEA-COMP:10287"/>
        <dbReference type="ChEBI" id="CHEBI:15378"/>
        <dbReference type="ChEBI" id="CHEBI:57856"/>
        <dbReference type="ChEBI" id="CHEBI:59789"/>
        <dbReference type="ChEBI" id="CHEBI:74506"/>
        <dbReference type="ChEBI" id="CHEBI:82748"/>
        <dbReference type="EC" id="2.1.1.199"/>
    </reaction>
</comment>
<comment type="subcellular location">
    <subcellularLocation>
        <location evidence="1">Cytoplasm</location>
    </subcellularLocation>
</comment>
<comment type="similarity">
    <text evidence="1">Belongs to the methyltransferase superfamily. RsmH family.</text>
</comment>
<dbReference type="EC" id="2.1.1.199" evidence="1"/>
<dbReference type="EMBL" id="AE002098">
    <property type="protein sequence ID" value="AAF40850.1"/>
    <property type="molecule type" value="Genomic_DNA"/>
</dbReference>
<dbReference type="PIR" id="H81201">
    <property type="entry name" value="H81201"/>
</dbReference>
<dbReference type="RefSeq" id="NP_273460.1">
    <property type="nucleotide sequence ID" value="NC_003112.2"/>
</dbReference>
<dbReference type="RefSeq" id="WP_002224919.1">
    <property type="nucleotide sequence ID" value="NC_003112.2"/>
</dbReference>
<dbReference type="SMR" id="Q9K0Z0"/>
<dbReference type="FunCoup" id="Q9K0Z0">
    <property type="interactions" value="535"/>
</dbReference>
<dbReference type="STRING" id="122586.NMB0411"/>
<dbReference type="PaxDb" id="122586-NMB0411"/>
<dbReference type="KEGG" id="nme:NMB0411"/>
<dbReference type="PATRIC" id="fig|122586.8.peg.521"/>
<dbReference type="HOGENOM" id="CLU_038422_2_0_4"/>
<dbReference type="InParanoid" id="Q9K0Z0"/>
<dbReference type="OrthoDB" id="9806637at2"/>
<dbReference type="Proteomes" id="UP000000425">
    <property type="component" value="Chromosome"/>
</dbReference>
<dbReference type="GO" id="GO:0005737">
    <property type="term" value="C:cytoplasm"/>
    <property type="evidence" value="ECO:0000318"/>
    <property type="project" value="GO_Central"/>
</dbReference>
<dbReference type="GO" id="GO:0071424">
    <property type="term" value="F:rRNA (cytosine-N4-)-methyltransferase activity"/>
    <property type="evidence" value="ECO:0000318"/>
    <property type="project" value="GO_Central"/>
</dbReference>
<dbReference type="GO" id="GO:0070475">
    <property type="term" value="P:rRNA base methylation"/>
    <property type="evidence" value="ECO:0000318"/>
    <property type="project" value="GO_Central"/>
</dbReference>
<dbReference type="FunFam" id="1.10.150.170:FF:000001">
    <property type="entry name" value="Ribosomal RNA small subunit methyltransferase H"/>
    <property type="match status" value="1"/>
</dbReference>
<dbReference type="Gene3D" id="1.10.150.170">
    <property type="entry name" value="Putative methyltransferase TM0872, insert domain"/>
    <property type="match status" value="1"/>
</dbReference>
<dbReference type="Gene3D" id="3.40.50.150">
    <property type="entry name" value="Vaccinia Virus protein VP39"/>
    <property type="match status" value="1"/>
</dbReference>
<dbReference type="HAMAP" id="MF_01007">
    <property type="entry name" value="16SrRNA_methyltr_H"/>
    <property type="match status" value="1"/>
</dbReference>
<dbReference type="InterPro" id="IPR002903">
    <property type="entry name" value="RsmH"/>
</dbReference>
<dbReference type="InterPro" id="IPR023397">
    <property type="entry name" value="SAM-dep_MeTrfase_MraW_recog"/>
</dbReference>
<dbReference type="InterPro" id="IPR029063">
    <property type="entry name" value="SAM-dependent_MTases_sf"/>
</dbReference>
<dbReference type="NCBIfam" id="TIGR00006">
    <property type="entry name" value="16S rRNA (cytosine(1402)-N(4))-methyltransferase RsmH"/>
    <property type="match status" value="1"/>
</dbReference>
<dbReference type="PANTHER" id="PTHR11265:SF0">
    <property type="entry name" value="12S RRNA N4-METHYLCYTIDINE METHYLTRANSFERASE"/>
    <property type="match status" value="1"/>
</dbReference>
<dbReference type="PANTHER" id="PTHR11265">
    <property type="entry name" value="S-ADENOSYL-METHYLTRANSFERASE MRAW"/>
    <property type="match status" value="1"/>
</dbReference>
<dbReference type="Pfam" id="PF01795">
    <property type="entry name" value="Methyltransf_5"/>
    <property type="match status" value="1"/>
</dbReference>
<dbReference type="PIRSF" id="PIRSF004486">
    <property type="entry name" value="MraW"/>
    <property type="match status" value="1"/>
</dbReference>
<dbReference type="SUPFAM" id="SSF81799">
    <property type="entry name" value="Putative methyltransferase TM0872, insert domain"/>
    <property type="match status" value="1"/>
</dbReference>
<dbReference type="SUPFAM" id="SSF53335">
    <property type="entry name" value="S-adenosyl-L-methionine-dependent methyltransferases"/>
    <property type="match status" value="1"/>
</dbReference>
<keyword id="KW-0963">Cytoplasm</keyword>
<keyword id="KW-0489">Methyltransferase</keyword>
<keyword id="KW-1185">Reference proteome</keyword>
<keyword id="KW-0698">rRNA processing</keyword>
<keyword id="KW-0949">S-adenosyl-L-methionine</keyword>
<keyword id="KW-0808">Transferase</keyword>
<organism>
    <name type="scientific">Neisseria meningitidis serogroup B (strain ATCC BAA-335 / MC58)</name>
    <dbReference type="NCBI Taxonomy" id="122586"/>
    <lineage>
        <taxon>Bacteria</taxon>
        <taxon>Pseudomonadati</taxon>
        <taxon>Pseudomonadota</taxon>
        <taxon>Betaproteobacteria</taxon>
        <taxon>Neisseriales</taxon>
        <taxon>Neisseriaceae</taxon>
        <taxon>Neisseria</taxon>
    </lineage>
</organism>
<evidence type="ECO:0000255" key="1">
    <source>
        <dbReference type="HAMAP-Rule" id="MF_01007"/>
    </source>
</evidence>
<feature type="chain" id="PRO_0000108671" description="Ribosomal RNA small subunit methyltransferase H">
    <location>
        <begin position="1"/>
        <end position="328"/>
    </location>
</feature>
<feature type="binding site" evidence="1">
    <location>
        <begin position="37"/>
        <end position="39"/>
    </location>
    <ligand>
        <name>S-adenosyl-L-methionine</name>
        <dbReference type="ChEBI" id="CHEBI:59789"/>
    </ligand>
</feature>
<feature type="binding site" evidence="1">
    <location>
        <position position="57"/>
    </location>
    <ligand>
        <name>S-adenosyl-L-methionine</name>
        <dbReference type="ChEBI" id="CHEBI:59789"/>
    </ligand>
</feature>
<feature type="binding site" evidence="1">
    <location>
        <position position="83"/>
    </location>
    <ligand>
        <name>S-adenosyl-L-methionine</name>
        <dbReference type="ChEBI" id="CHEBI:59789"/>
    </ligand>
</feature>
<feature type="binding site" evidence="1">
    <location>
        <position position="104"/>
    </location>
    <ligand>
        <name>S-adenosyl-L-methionine</name>
        <dbReference type="ChEBI" id="CHEBI:59789"/>
    </ligand>
</feature>
<feature type="binding site" evidence="1">
    <location>
        <position position="111"/>
    </location>
    <ligand>
        <name>S-adenosyl-L-methionine</name>
        <dbReference type="ChEBI" id="CHEBI:59789"/>
    </ligand>
</feature>
<reference key="1">
    <citation type="journal article" date="2000" name="Science">
        <title>Complete genome sequence of Neisseria meningitidis serogroup B strain MC58.</title>
        <authorList>
            <person name="Tettelin H."/>
            <person name="Saunders N.J."/>
            <person name="Heidelberg J.F."/>
            <person name="Jeffries A.C."/>
            <person name="Nelson K.E."/>
            <person name="Eisen J.A."/>
            <person name="Ketchum K.A."/>
            <person name="Hood D.W."/>
            <person name="Peden J.F."/>
            <person name="Dodson R.J."/>
            <person name="Nelson W.C."/>
            <person name="Gwinn M.L."/>
            <person name="DeBoy R.T."/>
            <person name="Peterson J.D."/>
            <person name="Hickey E.K."/>
            <person name="Haft D.H."/>
            <person name="Salzberg S.L."/>
            <person name="White O."/>
            <person name="Fleischmann R.D."/>
            <person name="Dougherty B.A."/>
            <person name="Mason T.M."/>
            <person name="Ciecko A."/>
            <person name="Parksey D.S."/>
            <person name="Blair E."/>
            <person name="Cittone H."/>
            <person name="Clark E.B."/>
            <person name="Cotton M.D."/>
            <person name="Utterback T.R."/>
            <person name="Khouri H.M."/>
            <person name="Qin H."/>
            <person name="Vamathevan J.J."/>
            <person name="Gill J."/>
            <person name="Scarlato V."/>
            <person name="Masignani V."/>
            <person name="Pizza M."/>
            <person name="Grandi G."/>
            <person name="Sun L."/>
            <person name="Smith H.O."/>
            <person name="Fraser C.M."/>
            <person name="Moxon E.R."/>
            <person name="Rappuoli R."/>
            <person name="Venter J.C."/>
        </authorList>
    </citation>
    <scope>NUCLEOTIDE SEQUENCE [LARGE SCALE GENOMIC DNA]</scope>
    <source>
        <strain>ATCC BAA-335 / MC58</strain>
    </source>
</reference>
<gene>
    <name evidence="1" type="primary">rsmH</name>
    <name type="synonym">mraW</name>
    <name type="ordered locus">NMB0411</name>
</gene>
<accession>Q9K0Z0</accession>
<sequence length="328" mass="36115">MSGAESYRHITVLLNEAVDALAVREDGVYVDGTFGRGGHSRLILSRLGDAGRLIVFDKDPQAIAVAEELARSDKRVGVVHGGFASFQTALDGLGIGKVDGALFDLGISSPQIDDGSRGFSFRFDAPLDMRMDTTRGMSAAEWIAVASEQDLHEVIKNYGEERFSRRIARAIVAQRAESPIDTTRKLAQIVAQNVRTRERGQDPATRTFQAVRIFINRELEEVGAVLPQVMCRLKEGGRLAVIAFHSLEDRIVKQFVKKYSQHAPLPRWAAVREADLPELPLKIVGRALKPGEAEIAANPRARSAVLRVAERTAGPIPEQSQRKTSEWQ</sequence>
<name>RSMH_NEIMB</name>